<protein>
    <recommendedName>
        <fullName>Ubiquitin-associated domain-containing protein 1</fullName>
        <shortName>UBA domain-containing protein 1</shortName>
    </recommendedName>
    <alternativeName>
        <fullName>E3 ubiquitin-protein ligase subunit KPC2</fullName>
    </alternativeName>
    <alternativeName>
        <fullName>Kip1 ubiquitination-promoting complex protein 2</fullName>
    </alternativeName>
</protein>
<name>UBAC1_RAT</name>
<keyword id="KW-0007">Acetylation</keyword>
<keyword id="KW-0963">Cytoplasm</keyword>
<keyword id="KW-1185">Reference proteome</keyword>
<keyword id="KW-0677">Repeat</keyword>
<keyword id="KW-0833">Ubl conjugation pathway</keyword>
<sequence>MFVQEEKIFAGKVLRLHICAADGSEWLEEATEDTSVEKLKESCLKHGAHGSLEDPKNVTHHKLIHAASERVLSDSKTILEENIQDQDVLLLIKKRAPSPIPKMADVSAEEKKKQEQKAPDKDAILRATANLPACSTDRTAVQTTMRDFQTELRKILVSLIEVAQKLLALNPDAVELFKKANAMLDEDEDERVDETALRQLTEMGFPESRASKALRLNHMSVPQAMEWLIEHSEDPAIDTPLPGHAAQAEASAAAATSSSSSEAAVGTSVEDEESRDELTEIFKKIRRKKEFRADARAVISLMEMGFDEKEVIDALRVNNNQQNAACEWLLGDRKPSPEELDQGIDPNSPLFQAILDNPVVQLGLTNPKTLLAFEDMLENPLNSTQWMNDPETGPVMLQISRIFQTLNRT</sequence>
<gene>
    <name type="primary">Ubac1</name>
    <name type="synonym">Kpc2</name>
    <name type="synonym">Ubadc1</name>
</gene>
<accession>Q5XIR9</accession>
<feature type="chain" id="PRO_0000250451" description="Ubiquitin-associated domain-containing protein 1">
    <location>
        <begin position="1"/>
        <end position="409"/>
    </location>
</feature>
<feature type="domain" description="Ubiquitin-like">
    <location>
        <begin position="14"/>
        <end position="98"/>
    </location>
</feature>
<feature type="domain" description="UBA 1" evidence="2">
    <location>
        <begin position="187"/>
        <end position="231"/>
    </location>
</feature>
<feature type="domain" description="UBA 2" evidence="2">
    <location>
        <begin position="292"/>
        <end position="332"/>
    </location>
</feature>
<feature type="domain" description="STI1">
    <location>
        <begin position="357"/>
        <end position="396"/>
    </location>
</feature>
<feature type="region of interest" description="Disordered" evidence="3">
    <location>
        <begin position="235"/>
        <end position="273"/>
    </location>
</feature>
<feature type="compositionally biased region" description="Low complexity" evidence="3">
    <location>
        <begin position="245"/>
        <end position="264"/>
    </location>
</feature>
<feature type="modified residue" description="N-acetylmethionine" evidence="1">
    <location>
        <position position="1"/>
    </location>
</feature>
<comment type="function">
    <text evidence="1">Non-catalytic component of the KPC complex, a E3 ubiquitin-protein ligase complex that mediates polyubiquitination of target proteins, such as CDKN1B and NFKB1. The KPC complex catalyzes polyubiquitination and proteasome-mediated degradation of CDKN1B during G1 phase of the cell cycle. The KPC complex also acts as a key regulator of the NF-kappa-B signaling by promoting maturation of the NFKB1 component of NF-kappa-B by catalyzing ubiquitination of the NFKB1 p105 precursor. Within the KPC complex, UBAC1 acts as an adapter that promotes the transfer of target proteins that have been polyubiquitinated by RNF123/KPC1 to the 26S proteasome.</text>
</comment>
<comment type="pathway">
    <text evidence="1">Protein modification; protein ubiquitination.</text>
</comment>
<comment type="subunit">
    <text evidence="1">Component of the KPC complex composed of RNF123/KPC1 and UBAC1/KPC2. Interacts (via ubiquitin-like domain) with RNF123. Interacts (via ubiquitin-like and UBA domains) with the proteasome via its N-terminal domain.</text>
</comment>
<comment type="subcellular location">
    <subcellularLocation>
        <location evidence="1">Cytoplasm</location>
    </subcellularLocation>
</comment>
<comment type="domain">
    <text evidence="1">The UBA domains recognize and bind polyubiquitinated proteins.</text>
</comment>
<evidence type="ECO:0000250" key="1">
    <source>
        <dbReference type="UniProtKB" id="Q9BSL1"/>
    </source>
</evidence>
<evidence type="ECO:0000255" key="2">
    <source>
        <dbReference type="PROSITE-ProRule" id="PRU00212"/>
    </source>
</evidence>
<evidence type="ECO:0000256" key="3">
    <source>
        <dbReference type="SAM" id="MobiDB-lite"/>
    </source>
</evidence>
<organism>
    <name type="scientific">Rattus norvegicus</name>
    <name type="common">Rat</name>
    <dbReference type="NCBI Taxonomy" id="10116"/>
    <lineage>
        <taxon>Eukaryota</taxon>
        <taxon>Metazoa</taxon>
        <taxon>Chordata</taxon>
        <taxon>Craniata</taxon>
        <taxon>Vertebrata</taxon>
        <taxon>Euteleostomi</taxon>
        <taxon>Mammalia</taxon>
        <taxon>Eutheria</taxon>
        <taxon>Euarchontoglires</taxon>
        <taxon>Glires</taxon>
        <taxon>Rodentia</taxon>
        <taxon>Myomorpha</taxon>
        <taxon>Muroidea</taxon>
        <taxon>Muridae</taxon>
        <taxon>Murinae</taxon>
        <taxon>Rattus</taxon>
    </lineage>
</organism>
<proteinExistence type="evidence at protein level"/>
<dbReference type="EMBL" id="BC083603">
    <property type="protein sequence ID" value="AAH83603.1"/>
    <property type="molecule type" value="mRNA"/>
</dbReference>
<dbReference type="RefSeq" id="NP_001007743.1">
    <property type="nucleotide sequence ID" value="NM_001007742.1"/>
</dbReference>
<dbReference type="SMR" id="Q5XIR9"/>
<dbReference type="FunCoup" id="Q5XIR9">
    <property type="interactions" value="1396"/>
</dbReference>
<dbReference type="STRING" id="10116.ENSRNOP00000024352"/>
<dbReference type="iPTMnet" id="Q5XIR9"/>
<dbReference type="PhosphoSitePlus" id="Q5XIR9"/>
<dbReference type="jPOST" id="Q5XIR9"/>
<dbReference type="PaxDb" id="10116-ENSRNOP00000024352"/>
<dbReference type="Ensembl" id="ENSRNOT00000024352.5">
    <property type="protein sequence ID" value="ENSRNOP00000024352.3"/>
    <property type="gene ID" value="ENSRNOG00000017983.6"/>
</dbReference>
<dbReference type="GeneID" id="362087"/>
<dbReference type="KEGG" id="rno:362087"/>
<dbReference type="UCSC" id="RGD:1359542">
    <property type="organism name" value="rat"/>
</dbReference>
<dbReference type="AGR" id="RGD:1359542"/>
<dbReference type="CTD" id="10422"/>
<dbReference type="RGD" id="1359542">
    <property type="gene designation" value="Ubac1"/>
</dbReference>
<dbReference type="eggNOG" id="ENOG502QQQ6">
    <property type="taxonomic scope" value="Eukaryota"/>
</dbReference>
<dbReference type="GeneTree" id="ENSGT00390000014658"/>
<dbReference type="HOGENOM" id="CLU_035938_0_0_1"/>
<dbReference type="InParanoid" id="Q5XIR9"/>
<dbReference type="PhylomeDB" id="Q5XIR9"/>
<dbReference type="TreeFam" id="TF324579"/>
<dbReference type="Reactome" id="R-RNO-983168">
    <property type="pathway name" value="Antigen processing: Ubiquitination &amp; Proteasome degradation"/>
</dbReference>
<dbReference type="UniPathway" id="UPA00143"/>
<dbReference type="PRO" id="PR:Q5XIR9"/>
<dbReference type="Proteomes" id="UP000002494">
    <property type="component" value="Chromosome 3"/>
</dbReference>
<dbReference type="Bgee" id="ENSRNOG00000017983">
    <property type="expression patterns" value="Expressed in skeletal muscle tissue and 20 other cell types or tissues"/>
</dbReference>
<dbReference type="GO" id="GO:0005737">
    <property type="term" value="C:cytoplasm"/>
    <property type="evidence" value="ECO:0007669"/>
    <property type="project" value="UniProtKB-SubCell"/>
</dbReference>
<dbReference type="GO" id="GO:0000151">
    <property type="term" value="C:ubiquitin ligase complex"/>
    <property type="evidence" value="ECO:0000318"/>
    <property type="project" value="GO_Central"/>
</dbReference>
<dbReference type="GO" id="GO:0031593">
    <property type="term" value="F:polyubiquitin modification-dependent protein binding"/>
    <property type="evidence" value="ECO:0000250"/>
    <property type="project" value="UniProtKB"/>
</dbReference>
<dbReference type="GO" id="GO:0070628">
    <property type="term" value="F:proteasome binding"/>
    <property type="evidence" value="ECO:0000250"/>
    <property type="project" value="UniProtKB"/>
</dbReference>
<dbReference type="GO" id="GO:0051604">
    <property type="term" value="P:protein maturation"/>
    <property type="evidence" value="ECO:0000250"/>
    <property type="project" value="UniProtKB"/>
</dbReference>
<dbReference type="GO" id="GO:0016567">
    <property type="term" value="P:protein ubiquitination"/>
    <property type="evidence" value="ECO:0000250"/>
    <property type="project" value="UniProtKB"/>
</dbReference>
<dbReference type="CDD" id="cd14303">
    <property type="entry name" value="UBA1_KPC2"/>
    <property type="match status" value="1"/>
</dbReference>
<dbReference type="CDD" id="cd14304">
    <property type="entry name" value="UBA2_KPC2"/>
    <property type="match status" value="1"/>
</dbReference>
<dbReference type="CDD" id="cd17066">
    <property type="entry name" value="Ubl_KPC2"/>
    <property type="match status" value="1"/>
</dbReference>
<dbReference type="FunFam" id="1.10.260.100:FF:000006">
    <property type="entry name" value="Ubiquitin-associated domain-containing protein 1"/>
    <property type="match status" value="1"/>
</dbReference>
<dbReference type="FunFam" id="1.10.8.10:FF:000099">
    <property type="entry name" value="Ubiquitin-associated domain-containing protein 1"/>
    <property type="match status" value="1"/>
</dbReference>
<dbReference type="Gene3D" id="1.10.260.100">
    <property type="match status" value="1"/>
</dbReference>
<dbReference type="Gene3D" id="1.10.8.10">
    <property type="entry name" value="DNA helicase RuvA subunit, C-terminal domain"/>
    <property type="match status" value="2"/>
</dbReference>
<dbReference type="InterPro" id="IPR006636">
    <property type="entry name" value="STI1_HS-bd"/>
</dbReference>
<dbReference type="InterPro" id="IPR015940">
    <property type="entry name" value="UBA"/>
</dbReference>
<dbReference type="InterPro" id="IPR009060">
    <property type="entry name" value="UBA-like_sf"/>
</dbReference>
<dbReference type="InterPro" id="IPR041926">
    <property type="entry name" value="UBA1_UBAC1"/>
</dbReference>
<dbReference type="InterPro" id="IPR041927">
    <property type="entry name" value="UBA2_UBAC1"/>
</dbReference>
<dbReference type="InterPro" id="IPR052476">
    <property type="entry name" value="UBAC1"/>
</dbReference>
<dbReference type="InterPro" id="IPR029071">
    <property type="entry name" value="Ubiquitin-like_domsf"/>
</dbReference>
<dbReference type="PANTHER" id="PTHR46738">
    <property type="entry name" value="UBIQUITIN-ASSOCIATED DOMAIN-CONTAINING PROTEIN 1"/>
    <property type="match status" value="1"/>
</dbReference>
<dbReference type="PANTHER" id="PTHR46738:SF1">
    <property type="entry name" value="UBIQUITIN-ASSOCIATED DOMAIN-CONTAINING PROTEIN 1"/>
    <property type="match status" value="1"/>
</dbReference>
<dbReference type="Pfam" id="PF22562">
    <property type="entry name" value="UBA_7"/>
    <property type="match status" value="2"/>
</dbReference>
<dbReference type="Pfam" id="PF23326">
    <property type="entry name" value="UBL_UBAC1"/>
    <property type="match status" value="1"/>
</dbReference>
<dbReference type="SMART" id="SM00727">
    <property type="entry name" value="STI1"/>
    <property type="match status" value="1"/>
</dbReference>
<dbReference type="SMART" id="SM00165">
    <property type="entry name" value="UBA"/>
    <property type="match status" value="2"/>
</dbReference>
<dbReference type="SUPFAM" id="SSF46934">
    <property type="entry name" value="UBA-like"/>
    <property type="match status" value="2"/>
</dbReference>
<dbReference type="SUPFAM" id="SSF54236">
    <property type="entry name" value="Ubiquitin-like"/>
    <property type="match status" value="1"/>
</dbReference>
<dbReference type="PROSITE" id="PS50030">
    <property type="entry name" value="UBA"/>
    <property type="match status" value="2"/>
</dbReference>
<reference key="1">
    <citation type="journal article" date="2004" name="Genome Res.">
        <title>The status, quality, and expansion of the NIH full-length cDNA project: the Mammalian Gene Collection (MGC).</title>
        <authorList>
            <consortium name="The MGC Project Team"/>
        </authorList>
    </citation>
    <scope>NUCLEOTIDE SEQUENCE [LARGE SCALE MRNA]</scope>
    <source>
        <tissue>Testis</tissue>
    </source>
</reference>
<reference key="2">
    <citation type="journal article" date="2006" name="Proc. Natl. Acad. Sci. U.S.A.">
        <title>Quantitative phosphoproteomics of vasopressin-sensitive renal cells: regulation of aquaporin-2 phosphorylation at two sites.</title>
        <authorList>
            <person name="Hoffert J.D."/>
            <person name="Pisitkun T."/>
            <person name="Wang G."/>
            <person name="Shen R.-F."/>
            <person name="Knepper M.A."/>
        </authorList>
    </citation>
    <scope>IDENTIFICATION BY MASS SPECTROMETRY [LARGE SCALE ANALYSIS]</scope>
</reference>